<sequence length="103" mass="11761">MSSSIPSFDFALFLNFRRNSVILSFSLISNIRVLLCDANRQLSYLTFSSFLSAFSCEICFIFASSFLILNIHTSVMSTLSQLNTQDFCKTEYFVNNIIVRIQS</sequence>
<name>YKL8_YEAST</name>
<organism>
    <name type="scientific">Saccharomyces cerevisiae (strain ATCC 204508 / S288c)</name>
    <name type="common">Baker's yeast</name>
    <dbReference type="NCBI Taxonomy" id="559292"/>
    <lineage>
        <taxon>Eukaryota</taxon>
        <taxon>Fungi</taxon>
        <taxon>Dikarya</taxon>
        <taxon>Ascomycota</taxon>
        <taxon>Saccharomycotina</taxon>
        <taxon>Saccharomycetes</taxon>
        <taxon>Saccharomycetales</taxon>
        <taxon>Saccharomycetaceae</taxon>
        <taxon>Saccharomyces</taxon>
    </lineage>
</organism>
<proteinExistence type="uncertain"/>
<dbReference type="EMBL" id="S93804">
    <property type="status" value="NOT_ANNOTATED_CDS"/>
    <property type="molecule type" value="Genomic_DNA"/>
</dbReference>
<dbReference type="EMBL" id="Z28118">
    <property type="protein sequence ID" value="CAA81959.1"/>
    <property type="molecule type" value="Genomic_DNA"/>
</dbReference>
<dbReference type="EMBL" id="Z28117">
    <property type="protein sequence ID" value="CAA81958.1"/>
    <property type="molecule type" value="Genomic_DNA"/>
</dbReference>
<dbReference type="EMBL" id="AY693342">
    <property type="protein sequence ID" value="AAT93361.1"/>
    <property type="molecule type" value="Genomic_DNA"/>
</dbReference>
<dbReference type="PIR" id="S37946">
    <property type="entry name" value="S37946"/>
</dbReference>
<dbReference type="STRING" id="4932.YKL118W"/>
<dbReference type="PaxDb" id="4932-YKL118W"/>
<dbReference type="EnsemblFungi" id="YKL118W_mRNA">
    <property type="protein sequence ID" value="YKL118W"/>
    <property type="gene ID" value="YKL118W"/>
</dbReference>
<dbReference type="AGR" id="SGD:S000001601"/>
<dbReference type="SGD" id="S000001601">
    <property type="gene designation" value="YKL118W"/>
</dbReference>
<dbReference type="HOGENOM" id="CLU_2265808_0_0_1"/>
<feature type="chain" id="PRO_0000203155" description="Putative uncharacterized protein YKL118W">
    <location>
        <begin position="1"/>
        <end position="103"/>
    </location>
</feature>
<gene>
    <name type="ordered locus">YKL118W</name>
</gene>
<evidence type="ECO:0000305" key="1"/>
<evidence type="ECO:0000305" key="2">
    <source>
    </source>
</evidence>
<reference key="1">
    <citation type="journal article" date="1992" name="Yeast">
        <title>Sequence of a 10.7 kb segment of yeast chromosome XI identifies the APN1 and the BAF1 loci and reveals one tRNA gene and several new open reading frames including homologs to RAD2 and kinases.</title>
        <authorList>
            <person name="Jacquier A."/>
            <person name="Legrain P."/>
            <person name="Dujon B."/>
        </authorList>
    </citation>
    <scope>NUCLEOTIDE SEQUENCE [GENOMIC DNA]</scope>
</reference>
<reference key="2">
    <citation type="journal article" date="1994" name="Nature">
        <title>Complete DNA sequence of yeast chromosome XI.</title>
        <authorList>
            <person name="Dujon B."/>
            <person name="Alexandraki D."/>
            <person name="Andre B."/>
            <person name="Ansorge W."/>
            <person name="Baladron V."/>
            <person name="Ballesta J.P.G."/>
            <person name="Banrevi A."/>
            <person name="Bolle P.-A."/>
            <person name="Bolotin-Fukuhara M."/>
            <person name="Bossier P."/>
            <person name="Bou G."/>
            <person name="Boyer J."/>
            <person name="Buitrago M.J."/>
            <person name="Cheret G."/>
            <person name="Colleaux L."/>
            <person name="Daignan-Fornier B."/>
            <person name="del Rey F."/>
            <person name="Dion C."/>
            <person name="Domdey H."/>
            <person name="Duesterhoeft A."/>
            <person name="Duesterhus S."/>
            <person name="Entian K.-D."/>
            <person name="Erfle H."/>
            <person name="Esteban P.F."/>
            <person name="Feldmann H."/>
            <person name="Fernandes L."/>
            <person name="Fobo G.M."/>
            <person name="Fritz C."/>
            <person name="Fukuhara H."/>
            <person name="Gabel C."/>
            <person name="Gaillon L."/>
            <person name="Garcia-Cantalejo J.M."/>
            <person name="Garcia-Ramirez J.J."/>
            <person name="Gent M.E."/>
            <person name="Ghazvini M."/>
            <person name="Goffeau A."/>
            <person name="Gonzalez A."/>
            <person name="Grothues D."/>
            <person name="Guerreiro P."/>
            <person name="Hegemann J.H."/>
            <person name="Hewitt N."/>
            <person name="Hilger F."/>
            <person name="Hollenberg C.P."/>
            <person name="Horaitis O."/>
            <person name="Indge K.J."/>
            <person name="Jacquier A."/>
            <person name="James C.M."/>
            <person name="Jauniaux J.-C."/>
            <person name="Jimenez A."/>
            <person name="Keuchel H."/>
            <person name="Kirchrath L."/>
            <person name="Kleine K."/>
            <person name="Koetter P."/>
            <person name="Legrain P."/>
            <person name="Liebl S."/>
            <person name="Louis E.J."/>
            <person name="Maia e Silva A."/>
            <person name="Marck C."/>
            <person name="Monnier A.-L."/>
            <person name="Moestl D."/>
            <person name="Mueller S."/>
            <person name="Obermaier B."/>
            <person name="Oliver S.G."/>
            <person name="Pallier C."/>
            <person name="Pascolo S."/>
            <person name="Pfeiffer F."/>
            <person name="Philippsen P."/>
            <person name="Planta R.J."/>
            <person name="Pohl F.M."/>
            <person name="Pohl T.M."/>
            <person name="Poehlmann R."/>
            <person name="Portetelle D."/>
            <person name="Purnelle B."/>
            <person name="Puzos V."/>
            <person name="Ramezani Rad M."/>
            <person name="Rasmussen S.W."/>
            <person name="Remacha M.A."/>
            <person name="Revuelta J.L."/>
            <person name="Richard G.-F."/>
            <person name="Rieger M."/>
            <person name="Rodrigues-Pousada C."/>
            <person name="Rose M."/>
            <person name="Rupp T."/>
            <person name="Santos M.A."/>
            <person name="Schwager C."/>
            <person name="Sensen C."/>
            <person name="Skala J."/>
            <person name="Soares H."/>
            <person name="Sor F."/>
            <person name="Stegemann J."/>
            <person name="Tettelin H."/>
            <person name="Thierry A."/>
            <person name="Tzermia M."/>
            <person name="Urrestarazu L.A."/>
            <person name="van Dyck L."/>
            <person name="van Vliet-Reedijk J.C."/>
            <person name="Valens M."/>
            <person name="Vandenbol M."/>
            <person name="Vilela C."/>
            <person name="Vissers S."/>
            <person name="von Wettstein D."/>
            <person name="Voss H."/>
            <person name="Wiemann S."/>
            <person name="Xu G."/>
            <person name="Zimmermann J."/>
            <person name="Haasemann M."/>
            <person name="Becker I."/>
            <person name="Mewes H.-W."/>
        </authorList>
    </citation>
    <scope>NUCLEOTIDE SEQUENCE [LARGE SCALE GENOMIC DNA]</scope>
    <source>
        <strain>ATCC 204508 / S288c</strain>
    </source>
</reference>
<reference key="3">
    <citation type="journal article" date="2014" name="G3 (Bethesda)">
        <title>The reference genome sequence of Saccharomyces cerevisiae: Then and now.</title>
        <authorList>
            <person name="Engel S.R."/>
            <person name="Dietrich F.S."/>
            <person name="Fisk D.G."/>
            <person name="Binkley G."/>
            <person name="Balakrishnan R."/>
            <person name="Costanzo M.C."/>
            <person name="Dwight S.S."/>
            <person name="Hitz B.C."/>
            <person name="Karra K."/>
            <person name="Nash R.S."/>
            <person name="Weng S."/>
            <person name="Wong E.D."/>
            <person name="Lloyd P."/>
            <person name="Skrzypek M.S."/>
            <person name="Miyasato S.R."/>
            <person name="Simison M."/>
            <person name="Cherry J.M."/>
        </authorList>
    </citation>
    <scope>GENOME REANNOTATION</scope>
    <source>
        <strain>ATCC 204508 / S288c</strain>
    </source>
</reference>
<reference key="4">
    <citation type="journal article" date="2007" name="Genome Res.">
        <title>Approaching a complete repository of sequence-verified protein-encoding clones for Saccharomyces cerevisiae.</title>
        <authorList>
            <person name="Hu Y."/>
            <person name="Rolfs A."/>
            <person name="Bhullar B."/>
            <person name="Murthy T.V.S."/>
            <person name="Zhu C."/>
            <person name="Berger M.F."/>
            <person name="Camargo A.A."/>
            <person name="Kelley F."/>
            <person name="McCarron S."/>
            <person name="Jepson D."/>
            <person name="Richardson A."/>
            <person name="Raphael J."/>
            <person name="Moreira D."/>
            <person name="Taycher E."/>
            <person name="Zuo D."/>
            <person name="Mohr S."/>
            <person name="Kane M.F."/>
            <person name="Williamson J."/>
            <person name="Simpson A.J.G."/>
            <person name="Bulyk M.L."/>
            <person name="Harlow E."/>
            <person name="Marsischky G."/>
            <person name="Kolodner R.D."/>
            <person name="LaBaer J."/>
        </authorList>
    </citation>
    <scope>NUCLEOTIDE SEQUENCE [GENOMIC DNA]</scope>
    <source>
        <strain>ATCC 204508 / S288c</strain>
    </source>
</reference>
<accession>P36072</accession>
<protein>
    <recommendedName>
        <fullName>Putative uncharacterized protein YKL118W</fullName>
    </recommendedName>
</protein>
<comment type="miscellaneous">
    <text evidence="1">Partially overlaps VPH2.</text>
</comment>
<comment type="caution">
    <text evidence="2">Product of a dubious gene prediction unlikely to encode a functional protein. Because of that it is not part of the S.cerevisiae S288c complete/reference proteome set.</text>
</comment>